<proteinExistence type="inferred from homology"/>
<feature type="chain" id="PRO_1000184189" description="Phosphonoacetaldehyde hydrolase">
    <location>
        <begin position="1"/>
        <end position="271"/>
    </location>
</feature>
<feature type="active site" description="Nucleophile" evidence="1">
    <location>
        <position position="12"/>
    </location>
</feature>
<feature type="active site" description="Schiff-base intermediate with substrate" evidence="1">
    <location>
        <position position="54"/>
    </location>
</feature>
<feature type="binding site" evidence="1">
    <location>
        <position position="12"/>
    </location>
    <ligand>
        <name>Mg(2+)</name>
        <dbReference type="ChEBI" id="CHEBI:18420"/>
    </ligand>
</feature>
<feature type="binding site" evidence="1">
    <location>
        <position position="14"/>
    </location>
    <ligand>
        <name>Mg(2+)</name>
        <dbReference type="ChEBI" id="CHEBI:18420"/>
    </ligand>
</feature>
<feature type="binding site" evidence="1">
    <location>
        <position position="188"/>
    </location>
    <ligand>
        <name>Mg(2+)</name>
        <dbReference type="ChEBI" id="CHEBI:18420"/>
    </ligand>
</feature>
<reference key="1">
    <citation type="journal article" date="2008" name="PLoS ONE">
        <title>A recalibrated molecular clock and independent origins for the cholera pandemic clones.</title>
        <authorList>
            <person name="Feng L."/>
            <person name="Reeves P.R."/>
            <person name="Lan R."/>
            <person name="Ren Y."/>
            <person name="Gao C."/>
            <person name="Zhou Z."/>
            <person name="Ren Y."/>
            <person name="Cheng J."/>
            <person name="Wang W."/>
            <person name="Wang J."/>
            <person name="Qian W."/>
            <person name="Li D."/>
            <person name="Wang L."/>
        </authorList>
    </citation>
    <scope>NUCLEOTIDE SEQUENCE [LARGE SCALE GENOMIC DNA]</scope>
    <source>
        <strain>M66-2</strain>
    </source>
</reference>
<gene>
    <name evidence="1" type="primary">phnX</name>
    <name type="ordered locus">VCM66_A0564</name>
</gene>
<protein>
    <recommendedName>
        <fullName evidence="1">Phosphonoacetaldehyde hydrolase</fullName>
        <shortName evidence="1">Phosphonatase</shortName>
        <ecNumber evidence="1">3.11.1.1</ecNumber>
    </recommendedName>
    <alternativeName>
        <fullName evidence="1">Phosphonoacetaldehyde phosphonohydrolase</fullName>
    </alternativeName>
</protein>
<evidence type="ECO:0000255" key="1">
    <source>
        <dbReference type="HAMAP-Rule" id="MF_01375"/>
    </source>
</evidence>
<name>PHNX_VIBCM</name>
<dbReference type="EC" id="3.11.1.1" evidence="1"/>
<dbReference type="EMBL" id="CP001234">
    <property type="protein sequence ID" value="ACP07526.1"/>
    <property type="molecule type" value="Genomic_DNA"/>
</dbReference>
<dbReference type="RefSeq" id="WP_001889086.1">
    <property type="nucleotide sequence ID" value="NC_012580.1"/>
</dbReference>
<dbReference type="SMR" id="C3LVM1"/>
<dbReference type="KEGG" id="vcm:VCM66_A0564"/>
<dbReference type="HOGENOM" id="CLU_045011_12_0_6"/>
<dbReference type="Proteomes" id="UP000001217">
    <property type="component" value="Chromosome II"/>
</dbReference>
<dbReference type="GO" id="GO:0005829">
    <property type="term" value="C:cytosol"/>
    <property type="evidence" value="ECO:0007669"/>
    <property type="project" value="TreeGrafter"/>
</dbReference>
<dbReference type="GO" id="GO:0000287">
    <property type="term" value="F:magnesium ion binding"/>
    <property type="evidence" value="ECO:0007669"/>
    <property type="project" value="UniProtKB-UniRule"/>
</dbReference>
<dbReference type="GO" id="GO:0008967">
    <property type="term" value="F:phosphoglycolate phosphatase activity"/>
    <property type="evidence" value="ECO:0007669"/>
    <property type="project" value="TreeGrafter"/>
</dbReference>
<dbReference type="GO" id="GO:0050194">
    <property type="term" value="F:phosphonoacetaldehyde hydrolase activity"/>
    <property type="evidence" value="ECO:0007669"/>
    <property type="project" value="UniProtKB-UniRule"/>
</dbReference>
<dbReference type="GO" id="GO:0006281">
    <property type="term" value="P:DNA repair"/>
    <property type="evidence" value="ECO:0007669"/>
    <property type="project" value="TreeGrafter"/>
</dbReference>
<dbReference type="GO" id="GO:0019700">
    <property type="term" value="P:organic phosphonate catabolic process"/>
    <property type="evidence" value="ECO:0007669"/>
    <property type="project" value="InterPro"/>
</dbReference>
<dbReference type="CDD" id="cd02586">
    <property type="entry name" value="HAD_PHN"/>
    <property type="match status" value="1"/>
</dbReference>
<dbReference type="FunFam" id="1.10.150.240:FF:000006">
    <property type="entry name" value="Phosphonoacetaldehyde hydrolase"/>
    <property type="match status" value="1"/>
</dbReference>
<dbReference type="Gene3D" id="3.40.50.1000">
    <property type="entry name" value="HAD superfamily/HAD-like"/>
    <property type="match status" value="1"/>
</dbReference>
<dbReference type="Gene3D" id="1.10.150.240">
    <property type="entry name" value="Putative phosphatase, domain 2"/>
    <property type="match status" value="1"/>
</dbReference>
<dbReference type="HAMAP" id="MF_01375">
    <property type="entry name" value="PhnX"/>
    <property type="match status" value="1"/>
</dbReference>
<dbReference type="InterPro" id="IPR050155">
    <property type="entry name" value="HAD-like_hydrolase_sf"/>
</dbReference>
<dbReference type="InterPro" id="IPR036412">
    <property type="entry name" value="HAD-like_sf"/>
</dbReference>
<dbReference type="InterPro" id="IPR006439">
    <property type="entry name" value="HAD-SF_hydro_IA"/>
</dbReference>
<dbReference type="InterPro" id="IPR023214">
    <property type="entry name" value="HAD_sf"/>
</dbReference>
<dbReference type="InterPro" id="IPR023198">
    <property type="entry name" value="PGP-like_dom2"/>
</dbReference>
<dbReference type="InterPro" id="IPR006323">
    <property type="entry name" value="Phosphonoacetald_hydro"/>
</dbReference>
<dbReference type="NCBIfam" id="TIGR01509">
    <property type="entry name" value="HAD-SF-IA-v3"/>
    <property type="match status" value="1"/>
</dbReference>
<dbReference type="NCBIfam" id="TIGR01422">
    <property type="entry name" value="phosphonatase"/>
    <property type="match status" value="1"/>
</dbReference>
<dbReference type="PANTHER" id="PTHR43434">
    <property type="entry name" value="PHOSPHOGLYCOLATE PHOSPHATASE"/>
    <property type="match status" value="1"/>
</dbReference>
<dbReference type="PANTHER" id="PTHR43434:SF19">
    <property type="entry name" value="PHOSPHONOACETALDEHYDE HYDROLASE"/>
    <property type="match status" value="1"/>
</dbReference>
<dbReference type="Pfam" id="PF00702">
    <property type="entry name" value="Hydrolase"/>
    <property type="match status" value="1"/>
</dbReference>
<dbReference type="SFLD" id="SFLDS00003">
    <property type="entry name" value="Haloacid_Dehalogenase"/>
    <property type="match status" value="1"/>
</dbReference>
<dbReference type="SFLD" id="SFLDF00038">
    <property type="entry name" value="phosphonoacetaldehyde_hydrolas"/>
    <property type="match status" value="1"/>
</dbReference>
<dbReference type="SUPFAM" id="SSF56784">
    <property type="entry name" value="HAD-like"/>
    <property type="match status" value="1"/>
</dbReference>
<accession>C3LVM1</accession>
<keyword id="KW-0378">Hydrolase</keyword>
<keyword id="KW-0460">Magnesium</keyword>
<keyword id="KW-0479">Metal-binding</keyword>
<keyword id="KW-0704">Schiff base</keyword>
<comment type="function">
    <text evidence="1">Involved in phosphonate degradation.</text>
</comment>
<comment type="catalytic activity">
    <reaction evidence="1">
        <text>phosphonoacetaldehyde + H2O = acetaldehyde + phosphate + H(+)</text>
        <dbReference type="Rhea" id="RHEA:18905"/>
        <dbReference type="ChEBI" id="CHEBI:15343"/>
        <dbReference type="ChEBI" id="CHEBI:15377"/>
        <dbReference type="ChEBI" id="CHEBI:15378"/>
        <dbReference type="ChEBI" id="CHEBI:43474"/>
        <dbReference type="ChEBI" id="CHEBI:58383"/>
        <dbReference type="EC" id="3.11.1.1"/>
    </reaction>
</comment>
<comment type="cofactor">
    <cofactor evidence="1">
        <name>Mg(2+)</name>
        <dbReference type="ChEBI" id="CHEBI:18420"/>
    </cofactor>
    <text evidence="1">Binds 1 Mg(2+) ion per subunit.</text>
</comment>
<comment type="subunit">
    <text evidence="1">Homodimer.</text>
</comment>
<comment type="similarity">
    <text evidence="1">Belongs to the HAD-like hydrolase superfamily. PhnX family.</text>
</comment>
<organism>
    <name type="scientific">Vibrio cholerae serotype O1 (strain M66-2)</name>
    <dbReference type="NCBI Taxonomy" id="579112"/>
    <lineage>
        <taxon>Bacteria</taxon>
        <taxon>Pseudomonadati</taxon>
        <taxon>Pseudomonadota</taxon>
        <taxon>Gammaproteobacteria</taxon>
        <taxon>Vibrionales</taxon>
        <taxon>Vibrionaceae</taxon>
        <taxon>Vibrio</taxon>
    </lineage>
</organism>
<sequence>MMNSPIQAVIFDWAGTIVDFGSFAPTSIFVEAFKQGFDFEISLAEAREPMGLGKWQHIEAVGKLPTVAQRWQKQFGRPMQASDIDAIYAAFMPLQIAKVADHAAPIPHSLEVVEQIRSRGIKIGSCSGYPRQVMDVLIAAAADYGYRPDYVVATDDLAQGGRPAPFMALKNVIELGVTDVRACVKVDDALPGIEEGHNAGMWTVGLLLSGNEAGLTLEEYQHADDQTLQAARERAQAKLQQAKPHYLIDTVADLPAVLAQIEQRLLAGERP</sequence>